<protein>
    <recommendedName>
        <fullName evidence="1">Riboflavin biosynthesis protein RibBA</fullName>
    </recommendedName>
    <domain>
        <recommendedName>
            <fullName evidence="1">3,4-dihydroxy-2-butanone 4-phosphate synthase</fullName>
            <shortName evidence="1">DHBP synthase</shortName>
            <ecNumber evidence="1">4.1.99.12</ecNumber>
        </recommendedName>
    </domain>
    <domain>
        <recommendedName>
            <fullName evidence="1">GTP cyclohydrolase-2</fullName>
            <ecNumber evidence="1">3.5.4.25</ecNumber>
        </recommendedName>
        <alternativeName>
            <fullName evidence="1">GTP cyclohydrolase II</fullName>
        </alternativeName>
    </domain>
</protein>
<evidence type="ECO:0000255" key="1">
    <source>
        <dbReference type="HAMAP-Rule" id="MF_01283"/>
    </source>
</evidence>
<name>RIBBA_CHLTR</name>
<dbReference type="EC" id="4.1.99.12" evidence="1"/>
<dbReference type="EC" id="3.5.4.25" evidence="1"/>
<dbReference type="EMBL" id="AE001273">
    <property type="protein sequence ID" value="AAC68326.1"/>
    <property type="molecule type" value="Genomic_DNA"/>
</dbReference>
<dbReference type="PIR" id="B71477">
    <property type="entry name" value="B71477"/>
</dbReference>
<dbReference type="RefSeq" id="NP_220250.1">
    <property type="nucleotide sequence ID" value="NC_000117.1"/>
</dbReference>
<dbReference type="RefSeq" id="WP_010725324.1">
    <property type="nucleotide sequence ID" value="NC_000117.1"/>
</dbReference>
<dbReference type="SMR" id="O84736"/>
<dbReference type="FunCoup" id="O84736">
    <property type="interactions" value="177"/>
</dbReference>
<dbReference type="STRING" id="272561.CT_731"/>
<dbReference type="EnsemblBacteria" id="AAC68326">
    <property type="protein sequence ID" value="AAC68326"/>
    <property type="gene ID" value="CT_731"/>
</dbReference>
<dbReference type="GeneID" id="884521"/>
<dbReference type="KEGG" id="ctr:CT_731"/>
<dbReference type="PATRIC" id="fig|272561.5.peg.804"/>
<dbReference type="HOGENOM" id="CLU_020273_1_2_0"/>
<dbReference type="InParanoid" id="O84736"/>
<dbReference type="OrthoDB" id="9793111at2"/>
<dbReference type="BioCyc" id="MetaCyc:MONOMER-18792"/>
<dbReference type="UniPathway" id="UPA00275">
    <property type="reaction ID" value="UER00399"/>
</dbReference>
<dbReference type="UniPathway" id="UPA00275">
    <property type="reaction ID" value="UER00400"/>
</dbReference>
<dbReference type="Proteomes" id="UP000000431">
    <property type="component" value="Chromosome"/>
</dbReference>
<dbReference type="GO" id="GO:0005829">
    <property type="term" value="C:cytosol"/>
    <property type="evidence" value="ECO:0000318"/>
    <property type="project" value="GO_Central"/>
</dbReference>
<dbReference type="GO" id="GO:0008686">
    <property type="term" value="F:3,4-dihydroxy-2-butanone-4-phosphate synthase activity"/>
    <property type="evidence" value="ECO:0007669"/>
    <property type="project" value="UniProtKB-UniRule"/>
</dbReference>
<dbReference type="GO" id="GO:0005525">
    <property type="term" value="F:GTP binding"/>
    <property type="evidence" value="ECO:0007669"/>
    <property type="project" value="UniProtKB-KW"/>
</dbReference>
<dbReference type="GO" id="GO:0003935">
    <property type="term" value="F:GTP cyclohydrolase II activity"/>
    <property type="evidence" value="ECO:0000318"/>
    <property type="project" value="GO_Central"/>
</dbReference>
<dbReference type="GO" id="GO:0000287">
    <property type="term" value="F:magnesium ion binding"/>
    <property type="evidence" value="ECO:0007669"/>
    <property type="project" value="UniProtKB-UniRule"/>
</dbReference>
<dbReference type="GO" id="GO:0030145">
    <property type="term" value="F:manganese ion binding"/>
    <property type="evidence" value="ECO:0007669"/>
    <property type="project" value="UniProtKB-UniRule"/>
</dbReference>
<dbReference type="GO" id="GO:0008270">
    <property type="term" value="F:zinc ion binding"/>
    <property type="evidence" value="ECO:0007669"/>
    <property type="project" value="UniProtKB-UniRule"/>
</dbReference>
<dbReference type="GO" id="GO:0009231">
    <property type="term" value="P:riboflavin biosynthetic process"/>
    <property type="evidence" value="ECO:0000318"/>
    <property type="project" value="GO_Central"/>
</dbReference>
<dbReference type="CDD" id="cd00641">
    <property type="entry name" value="GTP_cyclohydro2"/>
    <property type="match status" value="1"/>
</dbReference>
<dbReference type="FunFam" id="3.40.50.10990:FF:000001">
    <property type="entry name" value="Riboflavin biosynthesis protein RibBA"/>
    <property type="match status" value="1"/>
</dbReference>
<dbReference type="FunFam" id="3.90.870.10:FF:000001">
    <property type="entry name" value="Riboflavin biosynthesis protein RibBA"/>
    <property type="match status" value="1"/>
</dbReference>
<dbReference type="Gene3D" id="3.90.870.10">
    <property type="entry name" value="DHBP synthase"/>
    <property type="match status" value="1"/>
</dbReference>
<dbReference type="Gene3D" id="3.40.50.10990">
    <property type="entry name" value="GTP cyclohydrolase II"/>
    <property type="match status" value="1"/>
</dbReference>
<dbReference type="HAMAP" id="MF_00179">
    <property type="entry name" value="RibA"/>
    <property type="match status" value="1"/>
</dbReference>
<dbReference type="HAMAP" id="MF_01283">
    <property type="entry name" value="RibBA"/>
    <property type="match status" value="1"/>
</dbReference>
<dbReference type="InterPro" id="IPR017945">
    <property type="entry name" value="DHBP_synth_RibB-like_a/b_dom"/>
</dbReference>
<dbReference type="InterPro" id="IPR000422">
    <property type="entry name" value="DHBP_synthase_RibB"/>
</dbReference>
<dbReference type="InterPro" id="IPR032677">
    <property type="entry name" value="GTP_cyclohydro_II"/>
</dbReference>
<dbReference type="InterPro" id="IPR000926">
    <property type="entry name" value="RibA"/>
</dbReference>
<dbReference type="InterPro" id="IPR036144">
    <property type="entry name" value="RibA-like_sf"/>
</dbReference>
<dbReference type="InterPro" id="IPR016299">
    <property type="entry name" value="Riboflavin_synth_RibBA"/>
</dbReference>
<dbReference type="NCBIfam" id="NF001591">
    <property type="entry name" value="PRK00393.1"/>
    <property type="match status" value="1"/>
</dbReference>
<dbReference type="NCBIfam" id="NF006803">
    <property type="entry name" value="PRK09311.1"/>
    <property type="match status" value="1"/>
</dbReference>
<dbReference type="NCBIfam" id="TIGR00505">
    <property type="entry name" value="ribA"/>
    <property type="match status" value="1"/>
</dbReference>
<dbReference type="NCBIfam" id="TIGR00506">
    <property type="entry name" value="ribB"/>
    <property type="match status" value="1"/>
</dbReference>
<dbReference type="PANTHER" id="PTHR21327:SF18">
    <property type="entry name" value="3,4-DIHYDROXY-2-BUTANONE 4-PHOSPHATE SYNTHASE"/>
    <property type="match status" value="1"/>
</dbReference>
<dbReference type="PANTHER" id="PTHR21327">
    <property type="entry name" value="GTP CYCLOHYDROLASE II-RELATED"/>
    <property type="match status" value="1"/>
</dbReference>
<dbReference type="Pfam" id="PF00926">
    <property type="entry name" value="DHBP_synthase"/>
    <property type="match status" value="1"/>
</dbReference>
<dbReference type="Pfam" id="PF00925">
    <property type="entry name" value="GTP_cyclohydro2"/>
    <property type="match status" value="1"/>
</dbReference>
<dbReference type="PIRSF" id="PIRSF001259">
    <property type="entry name" value="RibA"/>
    <property type="match status" value="1"/>
</dbReference>
<dbReference type="SUPFAM" id="SSF142695">
    <property type="entry name" value="RibA-like"/>
    <property type="match status" value="1"/>
</dbReference>
<dbReference type="SUPFAM" id="SSF55821">
    <property type="entry name" value="YrdC/RibB"/>
    <property type="match status" value="1"/>
</dbReference>
<organism>
    <name type="scientific">Chlamydia trachomatis serovar D (strain ATCC VR-885 / DSM 19411 / UW-3/Cx)</name>
    <dbReference type="NCBI Taxonomy" id="272561"/>
    <lineage>
        <taxon>Bacteria</taxon>
        <taxon>Pseudomonadati</taxon>
        <taxon>Chlamydiota</taxon>
        <taxon>Chlamydiia</taxon>
        <taxon>Chlamydiales</taxon>
        <taxon>Chlamydiaceae</taxon>
        <taxon>Chlamydia/Chlamydophila group</taxon>
        <taxon>Chlamydia</taxon>
    </lineage>
</organism>
<keyword id="KW-0342">GTP-binding</keyword>
<keyword id="KW-0378">Hydrolase</keyword>
<keyword id="KW-0456">Lyase</keyword>
<keyword id="KW-0460">Magnesium</keyword>
<keyword id="KW-0464">Manganese</keyword>
<keyword id="KW-0479">Metal-binding</keyword>
<keyword id="KW-0511">Multifunctional enzyme</keyword>
<keyword id="KW-0547">Nucleotide-binding</keyword>
<keyword id="KW-1185">Reference proteome</keyword>
<keyword id="KW-0686">Riboflavin biosynthesis</keyword>
<keyword id="KW-0862">Zinc</keyword>
<sequence length="424" mass="46675">MFTCEAGIASVQQAIKDVAEGKFVIVIDAASRENEGDLILAGEKVSTEKMSFLLSHTTGIVCASLSREQAKSLDLPAMVQDNQCAFKTAFTVSVDASSGVTTGVSASDRTRTVQLLADPAATAESFVRPGHVFPLISQPGGAVQRPGHTEAAMDLMRLAGMQPCGIFAELVNPDHSMMRQQQVLAFAEQHDLTVITVDDLITYRYTYDSLVTKISSARLPTKYGDFSIHVYESIIDGTQHFALVKGDIHEQEAVPVRVHSECLTGDILGSCRCDCGAQLDMAMRYIAEEGLGVIVYLRGQEGRGIGFGHKIRAYALQDLGYDTVDANLQLGFPIDAREYGMAAQVLKDLQLTSVRLITHNPRKFFELQRLGIHVLDRIILPVSISTENEGYLRTKKERMGHWLDLPVLDDVEEEYETVERMSCR</sequence>
<proteinExistence type="inferred from homology"/>
<feature type="chain" id="PRO_0000151725" description="Riboflavin biosynthesis protein RibBA">
    <location>
        <begin position="1"/>
        <end position="424"/>
    </location>
</feature>
<feature type="region of interest" description="DHBP synthase">
    <location>
        <begin position="1"/>
        <end position="206"/>
    </location>
</feature>
<feature type="region of interest" description="GTP cyclohydrolase II">
    <location>
        <begin position="207"/>
        <end position="424"/>
    </location>
</feature>
<feature type="active site" description="Proton acceptor; for GTP cyclohydrolase activity" evidence="1">
    <location>
        <position position="335"/>
    </location>
</feature>
<feature type="active site" description="Nucleophile; for GTP cyclohydrolase activity" evidence="1">
    <location>
        <position position="337"/>
    </location>
</feature>
<feature type="binding site" evidence="1">
    <location>
        <begin position="32"/>
        <end position="33"/>
    </location>
    <ligand>
        <name>D-ribulose 5-phosphate</name>
        <dbReference type="ChEBI" id="CHEBI:58121"/>
    </ligand>
</feature>
<feature type="binding site" evidence="1">
    <location>
        <position position="33"/>
    </location>
    <ligand>
        <name>Mg(2+)</name>
        <dbReference type="ChEBI" id="CHEBI:18420"/>
        <label>1</label>
    </ligand>
</feature>
<feature type="binding site" evidence="1">
    <location>
        <position position="33"/>
    </location>
    <ligand>
        <name>Mg(2+)</name>
        <dbReference type="ChEBI" id="CHEBI:18420"/>
        <label>2</label>
    </ligand>
</feature>
<feature type="binding site" evidence="1">
    <location>
        <position position="37"/>
    </location>
    <ligand>
        <name>D-ribulose 5-phosphate</name>
        <dbReference type="ChEBI" id="CHEBI:58121"/>
    </ligand>
</feature>
<feature type="binding site" evidence="1">
    <location>
        <begin position="145"/>
        <end position="149"/>
    </location>
    <ligand>
        <name>D-ribulose 5-phosphate</name>
        <dbReference type="ChEBI" id="CHEBI:58121"/>
    </ligand>
</feature>
<feature type="binding site" evidence="1">
    <location>
        <position position="148"/>
    </location>
    <ligand>
        <name>Mg(2+)</name>
        <dbReference type="ChEBI" id="CHEBI:18420"/>
        <label>2</label>
    </ligand>
</feature>
<feature type="binding site" evidence="1">
    <location>
        <position position="169"/>
    </location>
    <ligand>
        <name>D-ribulose 5-phosphate</name>
        <dbReference type="ChEBI" id="CHEBI:58121"/>
    </ligand>
</feature>
<feature type="binding site" evidence="1">
    <location>
        <begin position="257"/>
        <end position="261"/>
    </location>
    <ligand>
        <name>GTP</name>
        <dbReference type="ChEBI" id="CHEBI:37565"/>
    </ligand>
</feature>
<feature type="binding site" evidence="1">
    <location>
        <position position="262"/>
    </location>
    <ligand>
        <name>Zn(2+)</name>
        <dbReference type="ChEBI" id="CHEBI:29105"/>
        <note>catalytic</note>
    </ligand>
</feature>
<feature type="binding site" evidence="1">
    <location>
        <position position="273"/>
    </location>
    <ligand>
        <name>Zn(2+)</name>
        <dbReference type="ChEBI" id="CHEBI:29105"/>
        <note>catalytic</note>
    </ligand>
</feature>
<feature type="binding site" evidence="1">
    <location>
        <position position="275"/>
    </location>
    <ligand>
        <name>Zn(2+)</name>
        <dbReference type="ChEBI" id="CHEBI:29105"/>
        <note>catalytic</note>
    </ligand>
</feature>
<feature type="binding site" evidence="1">
    <location>
        <position position="278"/>
    </location>
    <ligand>
        <name>GTP</name>
        <dbReference type="ChEBI" id="CHEBI:37565"/>
    </ligand>
</feature>
<feature type="binding site" evidence="1">
    <location>
        <begin position="301"/>
        <end position="303"/>
    </location>
    <ligand>
        <name>GTP</name>
        <dbReference type="ChEBI" id="CHEBI:37565"/>
    </ligand>
</feature>
<feature type="binding site" evidence="1">
    <location>
        <position position="323"/>
    </location>
    <ligand>
        <name>GTP</name>
        <dbReference type="ChEBI" id="CHEBI:37565"/>
    </ligand>
</feature>
<feature type="binding site" evidence="1">
    <location>
        <position position="358"/>
    </location>
    <ligand>
        <name>GTP</name>
        <dbReference type="ChEBI" id="CHEBI:37565"/>
    </ligand>
</feature>
<feature type="binding site" evidence="1">
    <location>
        <position position="363"/>
    </location>
    <ligand>
        <name>GTP</name>
        <dbReference type="ChEBI" id="CHEBI:37565"/>
    </ligand>
</feature>
<feature type="site" description="Essential for DHBP synthase activity" evidence="1">
    <location>
        <position position="131"/>
    </location>
</feature>
<feature type="site" description="Essential for DHBP synthase activity" evidence="1">
    <location>
        <position position="169"/>
    </location>
</feature>
<reference key="1">
    <citation type="journal article" date="1998" name="Science">
        <title>Genome sequence of an obligate intracellular pathogen of humans: Chlamydia trachomatis.</title>
        <authorList>
            <person name="Stephens R.S."/>
            <person name="Kalman S."/>
            <person name="Lammel C.J."/>
            <person name="Fan J."/>
            <person name="Marathe R."/>
            <person name="Aravind L."/>
            <person name="Mitchell W.P."/>
            <person name="Olinger L."/>
            <person name="Tatusov R.L."/>
            <person name="Zhao Q."/>
            <person name="Koonin E.V."/>
            <person name="Davis R.W."/>
        </authorList>
    </citation>
    <scope>NUCLEOTIDE SEQUENCE [LARGE SCALE GENOMIC DNA]</scope>
    <source>
        <strain>ATCC VR-885 / DSM 19411 / UW-3/Cx</strain>
    </source>
</reference>
<gene>
    <name evidence="1" type="primary">ribBA</name>
    <name type="synonym">ribA/ribB</name>
    <name type="ordered locus">CT_731</name>
</gene>
<comment type="function">
    <text evidence="1">Catalyzes the conversion of D-ribulose 5-phosphate to formate and 3,4-dihydroxy-2-butanone 4-phosphate.</text>
</comment>
<comment type="function">
    <text evidence="1">Catalyzes the conversion of GTP to 2,5-diamino-6-ribosylamino-4(3H)-pyrimidinone 5'-phosphate (DARP), formate and pyrophosphate.</text>
</comment>
<comment type="catalytic activity">
    <reaction evidence="1">
        <text>D-ribulose 5-phosphate = (2S)-2-hydroxy-3-oxobutyl phosphate + formate + H(+)</text>
        <dbReference type="Rhea" id="RHEA:18457"/>
        <dbReference type="ChEBI" id="CHEBI:15378"/>
        <dbReference type="ChEBI" id="CHEBI:15740"/>
        <dbReference type="ChEBI" id="CHEBI:58121"/>
        <dbReference type="ChEBI" id="CHEBI:58830"/>
        <dbReference type="EC" id="4.1.99.12"/>
    </reaction>
</comment>
<comment type="catalytic activity">
    <reaction evidence="1">
        <text>GTP + 4 H2O = 2,5-diamino-6-hydroxy-4-(5-phosphoribosylamino)-pyrimidine + formate + 2 phosphate + 3 H(+)</text>
        <dbReference type="Rhea" id="RHEA:23704"/>
        <dbReference type="ChEBI" id="CHEBI:15377"/>
        <dbReference type="ChEBI" id="CHEBI:15378"/>
        <dbReference type="ChEBI" id="CHEBI:15740"/>
        <dbReference type="ChEBI" id="CHEBI:37565"/>
        <dbReference type="ChEBI" id="CHEBI:43474"/>
        <dbReference type="ChEBI" id="CHEBI:58614"/>
        <dbReference type="EC" id="3.5.4.25"/>
    </reaction>
</comment>
<comment type="cofactor">
    <cofactor evidence="1">
        <name>Mg(2+)</name>
        <dbReference type="ChEBI" id="CHEBI:18420"/>
    </cofactor>
    <cofactor evidence="1">
        <name>Mn(2+)</name>
        <dbReference type="ChEBI" id="CHEBI:29035"/>
    </cofactor>
    <text evidence="1">Binds 2 divalent metal cations per subunit. Magnesium or manganese.</text>
</comment>
<comment type="cofactor">
    <cofactor evidence="1">
        <name>Zn(2+)</name>
        <dbReference type="ChEBI" id="CHEBI:29105"/>
    </cofactor>
    <text evidence="1">Binds 1 zinc ion per subunit.</text>
</comment>
<comment type="pathway">
    <text evidence="1">Cofactor biosynthesis; riboflavin biosynthesis; 2-hydroxy-3-oxobutyl phosphate from D-ribulose 5-phosphate: step 1/1.</text>
</comment>
<comment type="pathway">
    <text evidence="1">Cofactor biosynthesis; riboflavin biosynthesis; 5-amino-6-(D-ribitylamino)uracil from GTP: step 1/4.</text>
</comment>
<comment type="similarity">
    <text evidence="1">In the N-terminal section; belongs to the DHBP synthase family.</text>
</comment>
<comment type="similarity">
    <text evidence="1">In the C-terminal section; belongs to the GTP cyclohydrolase II family.</text>
</comment>
<accession>O84736</accession>